<evidence type="ECO:0000255" key="1">
    <source>
        <dbReference type="HAMAP-Rule" id="MF_00104"/>
    </source>
</evidence>
<organism>
    <name type="scientific">Shigella boydii serotype 4 (strain Sb227)</name>
    <dbReference type="NCBI Taxonomy" id="300268"/>
    <lineage>
        <taxon>Bacteria</taxon>
        <taxon>Pseudomonadati</taxon>
        <taxon>Pseudomonadota</taxon>
        <taxon>Gammaproteobacteria</taxon>
        <taxon>Enterobacterales</taxon>
        <taxon>Enterobacteriaceae</taxon>
        <taxon>Shigella</taxon>
    </lineage>
</organism>
<dbReference type="EC" id="3.1.26.3" evidence="1"/>
<dbReference type="EMBL" id="CP000036">
    <property type="protein sequence ID" value="ABB67138.1"/>
    <property type="molecule type" value="Genomic_DNA"/>
</dbReference>
<dbReference type="RefSeq" id="WP_001068343.1">
    <property type="nucleotide sequence ID" value="NC_007613.1"/>
</dbReference>
<dbReference type="SMR" id="Q31XS0"/>
<dbReference type="GeneID" id="93774524"/>
<dbReference type="KEGG" id="sbo:SBO_2595"/>
<dbReference type="HOGENOM" id="CLU_000907_1_1_6"/>
<dbReference type="Proteomes" id="UP000007067">
    <property type="component" value="Chromosome"/>
</dbReference>
<dbReference type="GO" id="GO:0005737">
    <property type="term" value="C:cytoplasm"/>
    <property type="evidence" value="ECO:0007669"/>
    <property type="project" value="UniProtKB-SubCell"/>
</dbReference>
<dbReference type="GO" id="GO:0003725">
    <property type="term" value="F:double-stranded RNA binding"/>
    <property type="evidence" value="ECO:0007669"/>
    <property type="project" value="TreeGrafter"/>
</dbReference>
<dbReference type="GO" id="GO:0046872">
    <property type="term" value="F:metal ion binding"/>
    <property type="evidence" value="ECO:0007669"/>
    <property type="project" value="UniProtKB-KW"/>
</dbReference>
<dbReference type="GO" id="GO:0004525">
    <property type="term" value="F:ribonuclease III activity"/>
    <property type="evidence" value="ECO:0007669"/>
    <property type="project" value="UniProtKB-UniRule"/>
</dbReference>
<dbReference type="GO" id="GO:0019843">
    <property type="term" value="F:rRNA binding"/>
    <property type="evidence" value="ECO:0007669"/>
    <property type="project" value="UniProtKB-KW"/>
</dbReference>
<dbReference type="GO" id="GO:0006397">
    <property type="term" value="P:mRNA processing"/>
    <property type="evidence" value="ECO:0007669"/>
    <property type="project" value="UniProtKB-UniRule"/>
</dbReference>
<dbReference type="GO" id="GO:0010468">
    <property type="term" value="P:regulation of gene expression"/>
    <property type="evidence" value="ECO:0007669"/>
    <property type="project" value="TreeGrafter"/>
</dbReference>
<dbReference type="GO" id="GO:0006364">
    <property type="term" value="P:rRNA processing"/>
    <property type="evidence" value="ECO:0007669"/>
    <property type="project" value="UniProtKB-UniRule"/>
</dbReference>
<dbReference type="GO" id="GO:0008033">
    <property type="term" value="P:tRNA processing"/>
    <property type="evidence" value="ECO:0007669"/>
    <property type="project" value="UniProtKB-KW"/>
</dbReference>
<dbReference type="CDD" id="cd10845">
    <property type="entry name" value="DSRM_RNAse_III_family"/>
    <property type="match status" value="1"/>
</dbReference>
<dbReference type="CDD" id="cd00593">
    <property type="entry name" value="RIBOc"/>
    <property type="match status" value="1"/>
</dbReference>
<dbReference type="FunFam" id="1.10.1520.10:FF:000001">
    <property type="entry name" value="Ribonuclease 3"/>
    <property type="match status" value="1"/>
</dbReference>
<dbReference type="FunFam" id="3.30.160.20:FF:000003">
    <property type="entry name" value="Ribonuclease 3"/>
    <property type="match status" value="1"/>
</dbReference>
<dbReference type="Gene3D" id="3.30.160.20">
    <property type="match status" value="1"/>
</dbReference>
<dbReference type="Gene3D" id="1.10.1520.10">
    <property type="entry name" value="Ribonuclease III domain"/>
    <property type="match status" value="1"/>
</dbReference>
<dbReference type="HAMAP" id="MF_00104">
    <property type="entry name" value="RNase_III"/>
    <property type="match status" value="1"/>
</dbReference>
<dbReference type="InterPro" id="IPR014720">
    <property type="entry name" value="dsRBD_dom"/>
</dbReference>
<dbReference type="InterPro" id="IPR011907">
    <property type="entry name" value="RNase_III"/>
</dbReference>
<dbReference type="InterPro" id="IPR000999">
    <property type="entry name" value="RNase_III_dom"/>
</dbReference>
<dbReference type="InterPro" id="IPR036389">
    <property type="entry name" value="RNase_III_sf"/>
</dbReference>
<dbReference type="NCBIfam" id="TIGR02191">
    <property type="entry name" value="RNaseIII"/>
    <property type="match status" value="1"/>
</dbReference>
<dbReference type="PANTHER" id="PTHR11207:SF0">
    <property type="entry name" value="RIBONUCLEASE 3"/>
    <property type="match status" value="1"/>
</dbReference>
<dbReference type="PANTHER" id="PTHR11207">
    <property type="entry name" value="RIBONUCLEASE III"/>
    <property type="match status" value="1"/>
</dbReference>
<dbReference type="Pfam" id="PF00035">
    <property type="entry name" value="dsrm"/>
    <property type="match status" value="1"/>
</dbReference>
<dbReference type="Pfam" id="PF14622">
    <property type="entry name" value="Ribonucleas_3_3"/>
    <property type="match status" value="1"/>
</dbReference>
<dbReference type="SMART" id="SM00358">
    <property type="entry name" value="DSRM"/>
    <property type="match status" value="1"/>
</dbReference>
<dbReference type="SMART" id="SM00535">
    <property type="entry name" value="RIBOc"/>
    <property type="match status" value="1"/>
</dbReference>
<dbReference type="SUPFAM" id="SSF54768">
    <property type="entry name" value="dsRNA-binding domain-like"/>
    <property type="match status" value="1"/>
</dbReference>
<dbReference type="SUPFAM" id="SSF69065">
    <property type="entry name" value="RNase III domain-like"/>
    <property type="match status" value="1"/>
</dbReference>
<dbReference type="PROSITE" id="PS50137">
    <property type="entry name" value="DS_RBD"/>
    <property type="match status" value="1"/>
</dbReference>
<dbReference type="PROSITE" id="PS00517">
    <property type="entry name" value="RNASE_3_1"/>
    <property type="match status" value="1"/>
</dbReference>
<dbReference type="PROSITE" id="PS50142">
    <property type="entry name" value="RNASE_3_2"/>
    <property type="match status" value="1"/>
</dbReference>
<protein>
    <recommendedName>
        <fullName evidence="1">Ribonuclease 3</fullName>
        <ecNumber evidence="1">3.1.26.3</ecNumber>
    </recommendedName>
    <alternativeName>
        <fullName evidence="1">Ribonuclease III</fullName>
        <shortName evidence="1">RNase III</shortName>
    </alternativeName>
</protein>
<accession>Q31XS0</accession>
<keyword id="KW-0963">Cytoplasm</keyword>
<keyword id="KW-0255">Endonuclease</keyword>
<keyword id="KW-0378">Hydrolase</keyword>
<keyword id="KW-0460">Magnesium</keyword>
<keyword id="KW-0479">Metal-binding</keyword>
<keyword id="KW-0507">mRNA processing</keyword>
<keyword id="KW-0540">Nuclease</keyword>
<keyword id="KW-0694">RNA-binding</keyword>
<keyword id="KW-0698">rRNA processing</keyword>
<keyword id="KW-0699">rRNA-binding</keyword>
<keyword id="KW-0819">tRNA processing</keyword>
<sequence length="226" mass="25550">MNPIVINRLQRKLGYTFNHQELLQQALTHRSASSKHNERLEFLGDSILSYVIANALYHRFPRVDEGDMSRMRATLVRGNTLAELAREFELGECLRLGPGELKSGGFRRESILADTVEALIGGVFLDSDIQTVEKLILNWYQTRLDEISPGDKQKDPKTRLQEYLQGRHLPLPTYLVVQVRGEAHDQEFTIHCQVSGLSEPVVGTGSSRRKAEQAAAEQALKKLELE</sequence>
<feature type="chain" id="PRO_0000228580" description="Ribonuclease 3">
    <location>
        <begin position="1"/>
        <end position="226"/>
    </location>
</feature>
<feature type="domain" description="RNase III" evidence="1">
    <location>
        <begin position="6"/>
        <end position="128"/>
    </location>
</feature>
<feature type="domain" description="DRBM" evidence="1">
    <location>
        <begin position="155"/>
        <end position="225"/>
    </location>
</feature>
<feature type="active site" evidence="1">
    <location>
        <position position="45"/>
    </location>
</feature>
<feature type="active site" evidence="1">
    <location>
        <position position="117"/>
    </location>
</feature>
<feature type="binding site" evidence="1">
    <location>
        <position position="41"/>
    </location>
    <ligand>
        <name>Mg(2+)</name>
        <dbReference type="ChEBI" id="CHEBI:18420"/>
    </ligand>
</feature>
<feature type="binding site" evidence="1">
    <location>
        <position position="114"/>
    </location>
    <ligand>
        <name>Mg(2+)</name>
        <dbReference type="ChEBI" id="CHEBI:18420"/>
    </ligand>
</feature>
<feature type="binding site" evidence="1">
    <location>
        <position position="117"/>
    </location>
    <ligand>
        <name>Mg(2+)</name>
        <dbReference type="ChEBI" id="CHEBI:18420"/>
    </ligand>
</feature>
<proteinExistence type="inferred from homology"/>
<reference key="1">
    <citation type="journal article" date="2005" name="Nucleic Acids Res.">
        <title>Genome dynamics and diversity of Shigella species, the etiologic agents of bacillary dysentery.</title>
        <authorList>
            <person name="Yang F."/>
            <person name="Yang J."/>
            <person name="Zhang X."/>
            <person name="Chen L."/>
            <person name="Jiang Y."/>
            <person name="Yan Y."/>
            <person name="Tang X."/>
            <person name="Wang J."/>
            <person name="Xiong Z."/>
            <person name="Dong J."/>
            <person name="Xue Y."/>
            <person name="Zhu Y."/>
            <person name="Xu X."/>
            <person name="Sun L."/>
            <person name="Chen S."/>
            <person name="Nie H."/>
            <person name="Peng J."/>
            <person name="Xu J."/>
            <person name="Wang Y."/>
            <person name="Yuan Z."/>
            <person name="Wen Y."/>
            <person name="Yao Z."/>
            <person name="Shen Y."/>
            <person name="Qiang B."/>
            <person name="Hou Y."/>
            <person name="Yu J."/>
            <person name="Jin Q."/>
        </authorList>
    </citation>
    <scope>NUCLEOTIDE SEQUENCE [LARGE SCALE GENOMIC DNA]</scope>
    <source>
        <strain>Sb227</strain>
    </source>
</reference>
<comment type="function">
    <text evidence="1">Digests double-stranded RNA. Involved in the processing of primary rRNA transcript to yield the immediate precursors to the large and small rRNAs (23S and 16S). Processes some mRNAs, and tRNAs when they are encoded in the rRNA operon. Processes pre-crRNA and tracrRNA of type II CRISPR loci if present in the organism.</text>
</comment>
<comment type="catalytic activity">
    <reaction evidence="1">
        <text>Endonucleolytic cleavage to 5'-phosphomonoester.</text>
        <dbReference type="EC" id="3.1.26.3"/>
    </reaction>
</comment>
<comment type="cofactor">
    <cofactor evidence="1">
        <name>Mg(2+)</name>
        <dbReference type="ChEBI" id="CHEBI:18420"/>
    </cofactor>
</comment>
<comment type="subunit">
    <text evidence="1">Homodimer.</text>
</comment>
<comment type="subcellular location">
    <subcellularLocation>
        <location evidence="1">Cytoplasm</location>
    </subcellularLocation>
</comment>
<comment type="similarity">
    <text evidence="1">Belongs to the ribonuclease III family.</text>
</comment>
<name>RNC_SHIBS</name>
<gene>
    <name evidence="1" type="primary">rnc</name>
    <name type="ordered locus">SBO_2595</name>
</gene>